<sequence>MVVCFLWLLLPYAATTLSASVPGCVPSGALLPRPTELSQSQNIKDATERLSRSLDDAVSGRIKAGWDIANTSFSVSIVSPNGGDPRTGVLWEYHHLAEKNINGTKHLDGDSQYLIGSVSKIFSDLLLLKSDVDLQDPITKYLPQLKNASSPIDWDNISLLSLSEHLSGIPANTIGALQFYFLEPLYRALGFPPLNKTDYPPCGIADLNKGCTPEELLTELVNSHPVSEPYERPVYSQLSFTLFSLALANDTGKDYAQMLEEQVIRPLNLRNTGVSPGEDKRAVIPNVEQQGWGADYGYNAPGGGLYSSLNDLSTLVTKILDYSILQNPQATKKWLQPRSATSSLNTLVGQPWEILRTSGMTPKYPHMIDIYGKSGGAPGYISQINVIDQYGVGVVLSTAGPLDSRAAYIINEAVLSAILPAVEDEARKQAGMYVGEYTSQKVDNEDATDYAPIKLKTVIDNGTGIKLESLSRNDSDILEGIRKVWSATLSTVGQLASEMRVYPTGLERLATNDKSLVEQDWRINFDLIPNFNEQASDLPGLGKLEALCTSWQTVDWLYYAGVPMDRIVFIVDKEAGRVVGVEIPFLRSGIIQKLN</sequence>
<accession>D4AXL1</accession>
<keyword id="KW-0325">Glycoprotein</keyword>
<keyword id="KW-0378">Hydrolase</keyword>
<keyword id="KW-1185">Reference proteome</keyword>
<keyword id="KW-0964">Secreted</keyword>
<keyword id="KW-0732">Signal</keyword>
<gene>
    <name type="ORF">ARB_00930</name>
</gene>
<reference key="1">
    <citation type="journal article" date="2011" name="Genome Biol.">
        <title>Comparative and functional genomics provide insights into the pathogenicity of dermatophytic fungi.</title>
        <authorList>
            <person name="Burmester A."/>
            <person name="Shelest E."/>
            <person name="Gloeckner G."/>
            <person name="Heddergott C."/>
            <person name="Schindler S."/>
            <person name="Staib P."/>
            <person name="Heidel A."/>
            <person name="Felder M."/>
            <person name="Petzold A."/>
            <person name="Szafranski K."/>
            <person name="Feuermann M."/>
            <person name="Pedruzzi I."/>
            <person name="Priebe S."/>
            <person name="Groth M."/>
            <person name="Winkler R."/>
            <person name="Li W."/>
            <person name="Kniemeyer O."/>
            <person name="Schroeckh V."/>
            <person name="Hertweck C."/>
            <person name="Hube B."/>
            <person name="White T.C."/>
            <person name="Platzer M."/>
            <person name="Guthke R."/>
            <person name="Heitman J."/>
            <person name="Woestemeyer J."/>
            <person name="Zipfel P.F."/>
            <person name="Monod M."/>
            <person name="Brakhage A.A."/>
        </authorList>
    </citation>
    <scope>NUCLEOTIDE SEQUENCE [LARGE SCALE GENOMIC DNA]</scope>
    <scope>IDENTIFICATION BY MASS SPECTROMETRY</scope>
    <scope>SUBCELLULAR LOCATION</scope>
    <source>
        <strain>ATCC MYA-4681 / CBS 112371</strain>
    </source>
</reference>
<reference key="2">
    <citation type="journal article" date="2011" name="Proteomics">
        <title>Identification of novel secreted proteases during extracellular proteolysis by dermatophytes at acidic pH.</title>
        <authorList>
            <person name="Sriranganadane D."/>
            <person name="Waridel P."/>
            <person name="Salamin K."/>
            <person name="Feuermann M."/>
            <person name="Mignon B."/>
            <person name="Staib P."/>
            <person name="Neuhaus J.M."/>
            <person name="Quadroni M."/>
            <person name="Monod M."/>
        </authorList>
    </citation>
    <scope>IDENTIFICATION BY MASS SPECTROMETRY</scope>
    <scope>SUBCELLULAR LOCATION</scope>
</reference>
<evidence type="ECO:0000250" key="1">
    <source>
        <dbReference type="UniProtKB" id="P00811"/>
    </source>
</evidence>
<evidence type="ECO:0000255" key="2"/>
<evidence type="ECO:0000255" key="3">
    <source>
        <dbReference type="PROSITE-ProRule" id="PRU00498"/>
    </source>
</evidence>
<evidence type="ECO:0000255" key="4">
    <source>
        <dbReference type="PROSITE-ProRule" id="PRU10102"/>
    </source>
</evidence>
<evidence type="ECO:0000269" key="5">
    <source>
    </source>
</evidence>
<evidence type="ECO:0000269" key="6">
    <source>
    </source>
</evidence>
<evidence type="ECO:0000305" key="7"/>
<organism>
    <name type="scientific">Arthroderma benhamiae (strain ATCC MYA-4681 / CBS 112371)</name>
    <name type="common">Trichophyton mentagrophytes</name>
    <dbReference type="NCBI Taxonomy" id="663331"/>
    <lineage>
        <taxon>Eukaryota</taxon>
        <taxon>Fungi</taxon>
        <taxon>Dikarya</taxon>
        <taxon>Ascomycota</taxon>
        <taxon>Pezizomycotina</taxon>
        <taxon>Eurotiomycetes</taxon>
        <taxon>Eurotiomycetidae</taxon>
        <taxon>Onygenales</taxon>
        <taxon>Arthrodermataceae</taxon>
        <taxon>Trichophyton</taxon>
    </lineage>
</organism>
<proteinExistence type="evidence at protein level"/>
<protein>
    <recommendedName>
        <fullName evidence="7">Beta-lactamase-like protein ARB_00930</fullName>
        <ecNumber evidence="7">3.5.2.6</ecNumber>
    </recommendedName>
</protein>
<name>BLML_ARTBC</name>
<dbReference type="EC" id="3.5.2.6" evidence="7"/>
<dbReference type="EMBL" id="ABSU01000017">
    <property type="protein sequence ID" value="EFE32039.1"/>
    <property type="molecule type" value="Genomic_DNA"/>
</dbReference>
<dbReference type="RefSeq" id="XP_003012679.1">
    <property type="nucleotide sequence ID" value="XM_003012633.1"/>
</dbReference>
<dbReference type="SMR" id="D4AXL1"/>
<dbReference type="STRING" id="663331.D4AXL1"/>
<dbReference type="GeneID" id="9522757"/>
<dbReference type="KEGG" id="abe:ARB_00930"/>
<dbReference type="eggNOG" id="ENOG502RX9C">
    <property type="taxonomic scope" value="Eukaryota"/>
</dbReference>
<dbReference type="HOGENOM" id="CLU_019706_2_0_1"/>
<dbReference type="OMA" id="VGLPWEI"/>
<dbReference type="OrthoDB" id="6220758at2759"/>
<dbReference type="Proteomes" id="UP000008866">
    <property type="component" value="Unassembled WGS sequence"/>
</dbReference>
<dbReference type="GO" id="GO:0005576">
    <property type="term" value="C:extracellular region"/>
    <property type="evidence" value="ECO:0007669"/>
    <property type="project" value="UniProtKB-SubCell"/>
</dbReference>
<dbReference type="GO" id="GO:0008800">
    <property type="term" value="F:beta-lactamase activity"/>
    <property type="evidence" value="ECO:0007669"/>
    <property type="project" value="UniProtKB-EC"/>
</dbReference>
<dbReference type="Gene3D" id="3.40.710.10">
    <property type="entry name" value="DD-peptidase/beta-lactamase superfamily"/>
    <property type="match status" value="1"/>
</dbReference>
<dbReference type="InterPro" id="IPR001466">
    <property type="entry name" value="Beta-lactam-related"/>
</dbReference>
<dbReference type="InterPro" id="IPR012338">
    <property type="entry name" value="Beta-lactam/transpept-like"/>
</dbReference>
<dbReference type="InterPro" id="IPR051478">
    <property type="entry name" value="Beta-lactamase-like_AB/R"/>
</dbReference>
<dbReference type="PANTHER" id="PTHR22935:SF95">
    <property type="entry name" value="BETA-LACTAMASE-LIKE 1-RELATED"/>
    <property type="match status" value="1"/>
</dbReference>
<dbReference type="PANTHER" id="PTHR22935">
    <property type="entry name" value="PENICILLIN-BINDING PROTEIN"/>
    <property type="match status" value="1"/>
</dbReference>
<dbReference type="Pfam" id="PF00144">
    <property type="entry name" value="Beta-lactamase"/>
    <property type="match status" value="1"/>
</dbReference>
<dbReference type="SUPFAM" id="SSF56601">
    <property type="entry name" value="beta-lactamase/transpeptidase-like"/>
    <property type="match status" value="1"/>
</dbReference>
<dbReference type="PROSITE" id="PS00146">
    <property type="entry name" value="BETA_LACTAMASE_A"/>
    <property type="match status" value="1"/>
</dbReference>
<comment type="catalytic activity">
    <reaction evidence="4">
        <text>a beta-lactam + H2O = a substituted beta-amino acid</text>
        <dbReference type="Rhea" id="RHEA:20401"/>
        <dbReference type="ChEBI" id="CHEBI:15377"/>
        <dbReference type="ChEBI" id="CHEBI:35627"/>
        <dbReference type="ChEBI" id="CHEBI:140347"/>
        <dbReference type="EC" id="3.5.2.6"/>
    </reaction>
</comment>
<comment type="subcellular location">
    <subcellularLocation>
        <location evidence="5 6">Secreted</location>
    </subcellularLocation>
</comment>
<comment type="similarity">
    <text evidence="7">Belongs to the beta-lactamase family.</text>
</comment>
<feature type="signal peptide" evidence="2">
    <location>
        <begin position="1"/>
        <end position="18"/>
    </location>
</feature>
<feature type="chain" id="PRO_0000434480" description="Beta-lactamase-like protein ARB_00930" evidence="2">
    <location>
        <begin position="19"/>
        <end position="595"/>
    </location>
</feature>
<feature type="active site" description="Acyl-ester intermediate" evidence="1">
    <location>
        <position position="117"/>
    </location>
</feature>
<feature type="active site" description="Proton acceptor" evidence="1">
    <location>
        <position position="235"/>
    </location>
</feature>
<feature type="glycosylation site" description="N-linked (GlcNAc...) asparagine" evidence="3">
    <location>
        <position position="70"/>
    </location>
</feature>
<feature type="glycosylation site" description="N-linked (GlcNAc...) asparagine" evidence="3">
    <location>
        <position position="102"/>
    </location>
</feature>
<feature type="glycosylation site" description="N-linked (GlcNAc...) asparagine" evidence="3">
    <location>
        <position position="147"/>
    </location>
</feature>
<feature type="glycosylation site" description="N-linked (GlcNAc...) asparagine" evidence="3">
    <location>
        <position position="156"/>
    </location>
</feature>
<feature type="glycosylation site" description="N-linked (GlcNAc...) asparagine" evidence="3">
    <location>
        <position position="195"/>
    </location>
</feature>
<feature type="glycosylation site" description="N-linked (GlcNAc...) asparagine" evidence="3">
    <location>
        <position position="249"/>
    </location>
</feature>
<feature type="glycosylation site" description="N-linked (GlcNAc...) asparagine" evidence="3">
    <location>
        <position position="461"/>
    </location>
</feature>
<feature type="glycosylation site" description="N-linked (GlcNAc...) asparagine" evidence="3">
    <location>
        <position position="473"/>
    </location>
</feature>